<protein>
    <recommendedName>
        <fullName>Atos homolog protein A</fullName>
    </recommendedName>
</protein>
<sequence>MKPDRDAAEEFFEYDAEEFLVFLTLLITEGRTPECSVKGRTEGVHCPPAQSAMPVLTKHECSDKIPQCRQARRTRSEVMLLWRNHIPIMIEVMLLPDCCYSDEGPTTDCTDLNDPAIKQDALLLERWTLQPVPRQSGDRFIEEKTLLLAVRSYVFFSQLSAWLSASHGIVPRNILYRISAADEELIWNFSQTPSEHAFPVPNVSHSVALKVRVQSLPRQPRYPVLKCSIHSGLAFLGKRALEHGEGGNQAGDNRSSLRLPRSPLFSRSLHPSPPSHSPLNTRKCPPRPESPLPPGKAVKWLYSRLNGGIDTPPSEPYSLCTNGAESPKTSRTESPIRGFKSLSITDPLVIPSPSSISGETNPLIGSLLQERQEVIARIAQRLNFCDPTAPHLPDALFTSQEPPGHKTTWNSTQDKECLKKSKDSLFSVPHPQNHNGNSLEIPERSRSSLFDTPLSPRTRTRLDRVDRESKTSPKPATCRRLVLSDQSAEGSLIADAVQDISRLIQERLQHSYSLLNGTYKLKTSQNEQVGSNHGAQTNGFVSLSSHKKPTNAPNGEESTDPHISHATKCCRSPDSSRRKPDCSPRPLKVASLKLEDHSVTKSQPLTASNHQHYVSRESWTSLKNNSSHASSPQENGLTQIGYHQPFKNRVAISEKEAEKHVRDGSTCLEKDENQEPHSSLSSTPANLTCNISSLAPTESNQTSCGNWKKQTRHSIDGTATKAFHPCTGLPLLSSPVPQRKSQTGYFDLDTSLIHCRGVPWAANRRVLKRSQDYDESQHQILSASAPPANLSLLGNFEECVLNYRLEPLGTVEGFTAEVGASGTFCPSHMTLPVDVSFYSVSDDNAPSPYMGVINLESLGKRGYRVPPSGTIQVTLFNPNKTVVKMFVVMYDLRDMPASHQTFLRQRTFSVPVKREFNGQSNKKTSLGQGRTLRYLVHLRFQSSKSGKIYLHRDIRLLFSRKSMEVDSGAAYELKSFTELPADPPFSPRC</sequence>
<dbReference type="EMBL" id="BX908748">
    <property type="protein sequence ID" value="CAK04512.1"/>
    <property type="status" value="ALT_INIT"/>
    <property type="molecule type" value="Genomic_DNA"/>
</dbReference>
<dbReference type="EMBL" id="BX936456">
    <property type="protein sequence ID" value="CAK04512.1"/>
    <property type="status" value="JOINED"/>
    <property type="molecule type" value="Genomic_DNA"/>
</dbReference>
<dbReference type="EMBL" id="BX936456">
    <property type="protein sequence ID" value="CAM56662.1"/>
    <property type="status" value="ALT_INIT"/>
    <property type="molecule type" value="Genomic_DNA"/>
</dbReference>
<dbReference type="EMBL" id="BX908748">
    <property type="protein sequence ID" value="CAM56662.1"/>
    <property type="status" value="JOINED"/>
    <property type="molecule type" value="Genomic_DNA"/>
</dbReference>
<dbReference type="EMBL" id="BC124301">
    <property type="protein sequence ID" value="AAI24302.1"/>
    <property type="status" value="ALT_SEQ"/>
    <property type="molecule type" value="mRNA"/>
</dbReference>
<dbReference type="FunCoup" id="Q1LV22">
    <property type="interactions" value="696"/>
</dbReference>
<dbReference type="STRING" id="7955.ENSDARP00000107518"/>
<dbReference type="PaxDb" id="7955-ENSDARP00000059207"/>
<dbReference type="AGR" id="ZFIN:ZDB-GENE-050419-204"/>
<dbReference type="ZFIN" id="ZDB-GENE-050419-204">
    <property type="gene designation" value="atosa"/>
</dbReference>
<dbReference type="eggNOG" id="KOG2306">
    <property type="taxonomic scope" value="Eukaryota"/>
</dbReference>
<dbReference type="InParanoid" id="Q1LV22"/>
<dbReference type="PhylomeDB" id="Q1LV22"/>
<dbReference type="PRO" id="PR:Q1LV22"/>
<dbReference type="Proteomes" id="UP000000437">
    <property type="component" value="Unplaced"/>
</dbReference>
<dbReference type="GO" id="GO:0005634">
    <property type="term" value="C:nucleus"/>
    <property type="evidence" value="ECO:0007669"/>
    <property type="project" value="UniProtKB-SubCell"/>
</dbReference>
<dbReference type="InterPro" id="IPR033473">
    <property type="entry name" value="Atos-like_C"/>
</dbReference>
<dbReference type="InterPro" id="IPR025261">
    <property type="entry name" value="Atos-like_cons_dom"/>
</dbReference>
<dbReference type="InterPro" id="IPR051506">
    <property type="entry name" value="ATOS_Transcription_Regulators"/>
</dbReference>
<dbReference type="PANTHER" id="PTHR13199:SF13">
    <property type="entry name" value="ATOS HOMOLOG PROTEIN A"/>
    <property type="match status" value="1"/>
</dbReference>
<dbReference type="PANTHER" id="PTHR13199">
    <property type="entry name" value="GH03947P"/>
    <property type="match status" value="1"/>
</dbReference>
<dbReference type="Pfam" id="PF13889">
    <property type="entry name" value="Chromosome_seg"/>
    <property type="match status" value="1"/>
</dbReference>
<dbReference type="Pfam" id="PF13915">
    <property type="entry name" value="DUF4210"/>
    <property type="match status" value="1"/>
</dbReference>
<dbReference type="SMART" id="SM01177">
    <property type="entry name" value="DUF4210"/>
    <property type="match status" value="1"/>
</dbReference>
<keyword id="KW-0025">Alternative splicing</keyword>
<keyword id="KW-0539">Nucleus</keyword>
<keyword id="KW-1185">Reference proteome</keyword>
<accession>Q1LV22</accession>
<accession>G1K2M7</accession>
<accession>Q08CB9</accession>
<reference key="1">
    <citation type="journal article" date="2013" name="Nature">
        <title>The zebrafish reference genome sequence and its relationship to the human genome.</title>
        <authorList>
            <person name="Howe K."/>
            <person name="Clark M.D."/>
            <person name="Torroja C.F."/>
            <person name="Torrance J."/>
            <person name="Berthelot C."/>
            <person name="Muffato M."/>
            <person name="Collins J.E."/>
            <person name="Humphray S."/>
            <person name="McLaren K."/>
            <person name="Matthews L."/>
            <person name="McLaren S."/>
            <person name="Sealy I."/>
            <person name="Caccamo M."/>
            <person name="Churcher C."/>
            <person name="Scott C."/>
            <person name="Barrett J.C."/>
            <person name="Koch R."/>
            <person name="Rauch G.J."/>
            <person name="White S."/>
            <person name="Chow W."/>
            <person name="Kilian B."/>
            <person name="Quintais L.T."/>
            <person name="Guerra-Assuncao J.A."/>
            <person name="Zhou Y."/>
            <person name="Gu Y."/>
            <person name="Yen J."/>
            <person name="Vogel J.H."/>
            <person name="Eyre T."/>
            <person name="Redmond S."/>
            <person name="Banerjee R."/>
            <person name="Chi J."/>
            <person name="Fu B."/>
            <person name="Langley E."/>
            <person name="Maguire S.F."/>
            <person name="Laird G.K."/>
            <person name="Lloyd D."/>
            <person name="Kenyon E."/>
            <person name="Donaldson S."/>
            <person name="Sehra H."/>
            <person name="Almeida-King J."/>
            <person name="Loveland J."/>
            <person name="Trevanion S."/>
            <person name="Jones M."/>
            <person name="Quail M."/>
            <person name="Willey D."/>
            <person name="Hunt A."/>
            <person name="Burton J."/>
            <person name="Sims S."/>
            <person name="McLay K."/>
            <person name="Plumb B."/>
            <person name="Davis J."/>
            <person name="Clee C."/>
            <person name="Oliver K."/>
            <person name="Clark R."/>
            <person name="Riddle C."/>
            <person name="Elliot D."/>
            <person name="Threadgold G."/>
            <person name="Harden G."/>
            <person name="Ware D."/>
            <person name="Begum S."/>
            <person name="Mortimore B."/>
            <person name="Kerry G."/>
            <person name="Heath P."/>
            <person name="Phillimore B."/>
            <person name="Tracey A."/>
            <person name="Corby N."/>
            <person name="Dunn M."/>
            <person name="Johnson C."/>
            <person name="Wood J."/>
            <person name="Clark S."/>
            <person name="Pelan S."/>
            <person name="Griffiths G."/>
            <person name="Smith M."/>
            <person name="Glithero R."/>
            <person name="Howden P."/>
            <person name="Barker N."/>
            <person name="Lloyd C."/>
            <person name="Stevens C."/>
            <person name="Harley J."/>
            <person name="Holt K."/>
            <person name="Panagiotidis G."/>
            <person name="Lovell J."/>
            <person name="Beasley H."/>
            <person name="Henderson C."/>
            <person name="Gordon D."/>
            <person name="Auger K."/>
            <person name="Wright D."/>
            <person name="Collins J."/>
            <person name="Raisen C."/>
            <person name="Dyer L."/>
            <person name="Leung K."/>
            <person name="Robertson L."/>
            <person name="Ambridge K."/>
            <person name="Leongamornlert D."/>
            <person name="McGuire S."/>
            <person name="Gilderthorp R."/>
            <person name="Griffiths C."/>
            <person name="Manthravadi D."/>
            <person name="Nichol S."/>
            <person name="Barker G."/>
            <person name="Whitehead S."/>
            <person name="Kay M."/>
            <person name="Brown J."/>
            <person name="Murnane C."/>
            <person name="Gray E."/>
            <person name="Humphries M."/>
            <person name="Sycamore N."/>
            <person name="Barker D."/>
            <person name="Saunders D."/>
            <person name="Wallis J."/>
            <person name="Babbage A."/>
            <person name="Hammond S."/>
            <person name="Mashreghi-Mohammadi M."/>
            <person name="Barr L."/>
            <person name="Martin S."/>
            <person name="Wray P."/>
            <person name="Ellington A."/>
            <person name="Matthews N."/>
            <person name="Ellwood M."/>
            <person name="Woodmansey R."/>
            <person name="Clark G."/>
            <person name="Cooper J."/>
            <person name="Tromans A."/>
            <person name="Grafham D."/>
            <person name="Skuce C."/>
            <person name="Pandian R."/>
            <person name="Andrews R."/>
            <person name="Harrison E."/>
            <person name="Kimberley A."/>
            <person name="Garnett J."/>
            <person name="Fosker N."/>
            <person name="Hall R."/>
            <person name="Garner P."/>
            <person name="Kelly D."/>
            <person name="Bird C."/>
            <person name="Palmer S."/>
            <person name="Gehring I."/>
            <person name="Berger A."/>
            <person name="Dooley C.M."/>
            <person name="Ersan-Urun Z."/>
            <person name="Eser C."/>
            <person name="Geiger H."/>
            <person name="Geisler M."/>
            <person name="Karotki L."/>
            <person name="Kirn A."/>
            <person name="Konantz J."/>
            <person name="Konantz M."/>
            <person name="Oberlander M."/>
            <person name="Rudolph-Geiger S."/>
            <person name="Teucke M."/>
            <person name="Lanz C."/>
            <person name="Raddatz G."/>
            <person name="Osoegawa K."/>
            <person name="Zhu B."/>
            <person name="Rapp A."/>
            <person name="Widaa S."/>
            <person name="Langford C."/>
            <person name="Yang F."/>
            <person name="Schuster S.C."/>
            <person name="Carter N.P."/>
            <person name="Harrow J."/>
            <person name="Ning Z."/>
            <person name="Herrero J."/>
            <person name="Searle S.M."/>
            <person name="Enright A."/>
            <person name="Geisler R."/>
            <person name="Plasterk R.H."/>
            <person name="Lee C."/>
            <person name="Westerfield M."/>
            <person name="de Jong P.J."/>
            <person name="Zon L.I."/>
            <person name="Postlethwait J.H."/>
            <person name="Nusslein-Volhard C."/>
            <person name="Hubbard T.J."/>
            <person name="Roest Crollius H."/>
            <person name="Rogers J."/>
            <person name="Stemple D.L."/>
        </authorList>
    </citation>
    <scope>NUCLEOTIDE SEQUENCE [LARGE SCALE GENOMIC DNA]</scope>
    <source>
        <strain>Tuebingen</strain>
    </source>
</reference>
<reference key="2">
    <citation type="submission" date="2006-09" db="EMBL/GenBank/DDBJ databases">
        <authorList>
            <consortium name="NIH - Zebrafish Gene Collection (ZGC) project"/>
        </authorList>
    </citation>
    <scope>NUCLEOTIDE SEQUENCE [LARGE SCALE MRNA] OF 1-687</scope>
    <source>
        <strain>AB</strain>
        <tissue>Skin</tissue>
    </source>
</reference>
<proteinExistence type="evidence at transcript level"/>
<comment type="function">
    <text evidence="1">Transcription regulator that syncronizes transcriptional and translational programs to promote macrophage invasion of tissues.</text>
</comment>
<comment type="subcellular location">
    <subcellularLocation>
        <location evidence="2">Nucleus</location>
    </subcellularLocation>
</comment>
<comment type="alternative products">
    <event type="alternative splicing"/>
    <isoform>
        <id>Q1LV22-1</id>
        <name>1</name>
        <sequence type="displayed"/>
    </isoform>
    <isoform>
        <id>Q1LV22-2</id>
        <name>2</name>
        <sequence type="described" ref="VSP_042436"/>
    </isoform>
</comment>
<comment type="domain">
    <text evidence="1">The protein contains 2 transactivation domains (TAD). Each of these domains may be required for transcriptional activation of a subset of target genes.</text>
</comment>
<comment type="similarity">
    <text evidence="4">Belongs to the ATOS family.</text>
</comment>
<comment type="sequence caution" evidence="4">
    <conflict type="miscellaneous discrepancy">
        <sequence resource="EMBL-CDS" id="AAI24302"/>
    </conflict>
    <text>Contaminating sequence. Potential poly-A sequence.</text>
</comment>
<comment type="sequence caution" evidence="4">
    <conflict type="erroneous initiation">
        <sequence resource="EMBL-CDS" id="CAK04512"/>
    </conflict>
    <text>Extended N-terminus.</text>
</comment>
<comment type="sequence caution" evidence="4">
    <conflict type="erroneous initiation">
        <sequence resource="EMBL-CDS" id="CAM56662"/>
    </conflict>
    <text>Extended N-terminus.</text>
</comment>
<feature type="chain" id="PRO_0000315616" description="Atos homolog protein A">
    <location>
        <begin position="1"/>
        <end position="989"/>
    </location>
</feature>
<feature type="region of interest" description="Transactivation domain 1 (TAD1)" evidence="1">
    <location>
        <begin position="24"/>
        <end position="32"/>
    </location>
</feature>
<feature type="region of interest" description="Disordered" evidence="3">
    <location>
        <begin position="244"/>
        <end position="295"/>
    </location>
</feature>
<feature type="region of interest" description="Disordered" evidence="3">
    <location>
        <begin position="393"/>
        <end position="477"/>
    </location>
</feature>
<feature type="region of interest" description="Disordered" evidence="3">
    <location>
        <begin position="525"/>
        <end position="639"/>
    </location>
</feature>
<feature type="region of interest" description="Disordered" evidence="3">
    <location>
        <begin position="656"/>
        <end position="686"/>
    </location>
</feature>
<feature type="region of interest" description="Required for macropage invasion" evidence="1">
    <location>
        <begin position="792"/>
        <end position="849"/>
    </location>
</feature>
<feature type="region of interest" description="Transactivation domain 2 (TAD2)" evidence="1">
    <location>
        <begin position="876"/>
        <end position="884"/>
    </location>
</feature>
<feature type="compositionally biased region" description="Low complexity" evidence="3">
    <location>
        <begin position="254"/>
        <end position="270"/>
    </location>
</feature>
<feature type="compositionally biased region" description="Polar residues" evidence="3">
    <location>
        <begin position="397"/>
        <end position="412"/>
    </location>
</feature>
<feature type="compositionally biased region" description="Basic and acidic residues" evidence="3">
    <location>
        <begin position="413"/>
        <end position="423"/>
    </location>
</feature>
<feature type="compositionally biased region" description="Basic and acidic residues" evidence="3">
    <location>
        <begin position="460"/>
        <end position="471"/>
    </location>
</feature>
<feature type="compositionally biased region" description="Polar residues" evidence="3">
    <location>
        <begin position="525"/>
        <end position="544"/>
    </location>
</feature>
<feature type="compositionally biased region" description="Polar residues" evidence="3">
    <location>
        <begin position="600"/>
        <end position="638"/>
    </location>
</feature>
<feature type="compositionally biased region" description="Basic and acidic residues" evidence="3">
    <location>
        <begin position="656"/>
        <end position="675"/>
    </location>
</feature>
<feature type="compositionally biased region" description="Polar residues" evidence="3">
    <location>
        <begin position="676"/>
        <end position="686"/>
    </location>
</feature>
<feature type="splice variant" id="VSP_042436" description="In isoform 2." evidence="4">
    <original>T</original>
    <variation>TQRCSPTPLK</variation>
    <location>
        <position position="702"/>
    </location>
</feature>
<feature type="sequence conflict" description="In Ref. 2; AAI24302." evidence="4" ref="2">
    <original>T</original>
    <variation>N</variation>
    <location>
        <position position="57"/>
    </location>
</feature>
<feature type="sequence conflict" description="In Ref. 2; AAI24302." evidence="4" ref="2">
    <original>S</original>
    <variation>R</variation>
    <location>
        <position position="352"/>
    </location>
</feature>
<feature type="sequence conflict" description="In Ref. 2; AAI24302." evidence="4" ref="2">
    <original>S</original>
    <variation>T</variation>
    <location>
        <position position="424"/>
    </location>
</feature>
<feature type="sequence conflict" description="In Ref. 2; AAI24302." evidence="4" ref="2">
    <original>S</original>
    <variation>P</variation>
    <location>
        <position position="427"/>
    </location>
</feature>
<feature type="sequence conflict" description="In Ref. 2; AAI24302." evidence="4" ref="2">
    <original>N</original>
    <variation>D</variation>
    <location>
        <position position="551"/>
    </location>
</feature>
<evidence type="ECO:0000250" key="1">
    <source>
        <dbReference type="UniProtKB" id="Q69ZK7"/>
    </source>
</evidence>
<evidence type="ECO:0000250" key="2">
    <source>
        <dbReference type="UniProtKB" id="Q7JXG9"/>
    </source>
</evidence>
<evidence type="ECO:0000256" key="3">
    <source>
        <dbReference type="SAM" id="MobiDB-lite"/>
    </source>
</evidence>
<evidence type="ECO:0000305" key="4"/>
<name>ATOSA_DANRE</name>
<organism>
    <name type="scientific">Danio rerio</name>
    <name type="common">Zebrafish</name>
    <name type="synonym">Brachydanio rerio</name>
    <dbReference type="NCBI Taxonomy" id="7955"/>
    <lineage>
        <taxon>Eukaryota</taxon>
        <taxon>Metazoa</taxon>
        <taxon>Chordata</taxon>
        <taxon>Craniata</taxon>
        <taxon>Vertebrata</taxon>
        <taxon>Euteleostomi</taxon>
        <taxon>Actinopterygii</taxon>
        <taxon>Neopterygii</taxon>
        <taxon>Teleostei</taxon>
        <taxon>Ostariophysi</taxon>
        <taxon>Cypriniformes</taxon>
        <taxon>Danionidae</taxon>
        <taxon>Danioninae</taxon>
        <taxon>Danio</taxon>
    </lineage>
</organism>
<gene>
    <name type="primary">atosa</name>
    <name type="synonym">fam214a</name>
    <name type="ORF">si:dkey-266j9.3</name>
</gene>